<organism>
    <name type="scientific">Vigna radiata var. radiata</name>
    <name type="common">Mung bean</name>
    <name type="synonym">Phaseolus aureus</name>
    <dbReference type="NCBI Taxonomy" id="3916"/>
    <lineage>
        <taxon>Eukaryota</taxon>
        <taxon>Viridiplantae</taxon>
        <taxon>Streptophyta</taxon>
        <taxon>Embryophyta</taxon>
        <taxon>Tracheophyta</taxon>
        <taxon>Spermatophyta</taxon>
        <taxon>Magnoliopsida</taxon>
        <taxon>eudicotyledons</taxon>
        <taxon>Gunneridae</taxon>
        <taxon>Pentapetalae</taxon>
        <taxon>rosids</taxon>
        <taxon>fabids</taxon>
        <taxon>Fabales</taxon>
        <taxon>Fabaceae</taxon>
        <taxon>Papilionoideae</taxon>
        <taxon>50 kb inversion clade</taxon>
        <taxon>NPAAA clade</taxon>
        <taxon>indigoferoid/millettioid clade</taxon>
        <taxon>Phaseoleae</taxon>
        <taxon>Vigna</taxon>
    </lineage>
</organism>
<dbReference type="EMBL" id="D14412">
    <property type="protein sequence ID" value="BAA03308.1"/>
    <property type="molecule type" value="mRNA"/>
</dbReference>
<dbReference type="PIR" id="T10939">
    <property type="entry name" value="T10939"/>
</dbReference>
<dbReference type="SMR" id="P32293"/>
<dbReference type="STRING" id="3916.P32293"/>
<dbReference type="Proteomes" id="UP000087766">
    <property type="component" value="Unplaced"/>
</dbReference>
<dbReference type="GO" id="GO:0005634">
    <property type="term" value="C:nucleus"/>
    <property type="evidence" value="ECO:0007669"/>
    <property type="project" value="UniProtKB-SubCell"/>
</dbReference>
<dbReference type="GO" id="GO:0009734">
    <property type="term" value="P:auxin-activated signaling pathway"/>
    <property type="evidence" value="ECO:0007669"/>
    <property type="project" value="UniProtKB-KW"/>
</dbReference>
<dbReference type="GO" id="GO:0006355">
    <property type="term" value="P:regulation of DNA-templated transcription"/>
    <property type="evidence" value="ECO:0007669"/>
    <property type="project" value="InterPro"/>
</dbReference>
<dbReference type="FunFam" id="3.10.20.90:FF:000078">
    <property type="entry name" value="Auxin-responsive protein"/>
    <property type="match status" value="1"/>
</dbReference>
<dbReference type="Gene3D" id="3.10.20.90">
    <property type="entry name" value="Phosphatidylinositol 3-kinase Catalytic Subunit, Chain A, domain 1"/>
    <property type="match status" value="1"/>
</dbReference>
<dbReference type="InterPro" id="IPR033389">
    <property type="entry name" value="AUX/IAA_dom"/>
</dbReference>
<dbReference type="InterPro" id="IPR003311">
    <property type="entry name" value="AUX_IAA"/>
</dbReference>
<dbReference type="InterPro" id="IPR053793">
    <property type="entry name" value="PB1-like"/>
</dbReference>
<dbReference type="PANTHER" id="PTHR31734">
    <property type="entry name" value="AUXIN-RESPONSIVE PROTEIN IAA17"/>
    <property type="match status" value="1"/>
</dbReference>
<dbReference type="PANTHER" id="PTHR31734:SF121">
    <property type="entry name" value="AUXIN-RESPONSIVE PROTEIN IAA19"/>
    <property type="match status" value="1"/>
</dbReference>
<dbReference type="Pfam" id="PF02309">
    <property type="entry name" value="AUX_IAA"/>
    <property type="match status" value="1"/>
</dbReference>
<dbReference type="SUPFAM" id="SSF54277">
    <property type="entry name" value="CAD &amp; PB1 domains"/>
    <property type="match status" value="1"/>
</dbReference>
<dbReference type="PROSITE" id="PS51745">
    <property type="entry name" value="PB1"/>
    <property type="match status" value="1"/>
</dbReference>
<comment type="function">
    <text evidence="1">Aux/IAA proteins are short-lived transcriptional factors that function as repressors of early auxin response genes at low auxin concentrations. Repression is thought to result from the interaction with auxin response factors (ARFs), proteins that bind to the auxin-responsive promoter element (AuxRE). Formation of heterodimers with ARF proteins may alter their ability to modulate early auxin response genes expression (By similarity).</text>
</comment>
<comment type="subunit">
    <text evidence="1">Homodimers and heterodimers.</text>
</comment>
<comment type="subcellular location">
    <subcellularLocation>
        <location evidence="1">Nucleus</location>
    </subcellularLocation>
</comment>
<comment type="developmental stage">
    <text>Found in elongating hypocotyls.</text>
</comment>
<comment type="induction">
    <text>By auxin and cycloheximide.</text>
</comment>
<comment type="domain">
    <text evidence="1">The N-terminal half of the protein contains two conserved domains I and II. Domain I includes a slightly degenerated ERF-associated amphiphilic repression (EAR) motif which seems to be involved in the activity of transcriptional repression. Domain II is required for the correct degradation of the protein through the SCF-mediated ubiquitin-proteasome pathway. Interactions between Aux/IAA proteins and auxin response factors (ARFs) occur through their C-terminal dimerization domains III and IV (By similarity).</text>
</comment>
<comment type="similarity">
    <text evidence="4">Belongs to the Aux/IAA family.</text>
</comment>
<keyword id="KW-0927">Auxin signaling pathway</keyword>
<keyword id="KW-0539">Nucleus</keyword>
<keyword id="KW-1185">Reference proteome</keyword>
<keyword id="KW-0678">Repressor</keyword>
<keyword id="KW-0804">Transcription</keyword>
<keyword id="KW-0805">Transcription regulation</keyword>
<protein>
    <recommendedName>
        <fullName>Auxin-induced protein 22A</fullName>
    </recommendedName>
    <alternativeName>
        <fullName>Indole-3-acetic acid-induced protein ARG3</fullName>
    </alternativeName>
</protein>
<feature type="chain" id="PRO_0000112863" description="Auxin-induced protein 22A">
    <location>
        <begin position="1"/>
        <end position="194"/>
    </location>
</feature>
<feature type="domain" description="PB1" evidence="2">
    <location>
        <begin position="85"/>
        <end position="173"/>
    </location>
</feature>
<feature type="region of interest" description="Disordered" evidence="3">
    <location>
        <begin position="40"/>
        <end position="62"/>
    </location>
</feature>
<feature type="short sequence motif" description="EAR-like (transcriptional repression)">
    <location>
        <begin position="13"/>
        <end position="17"/>
    </location>
</feature>
<name>AX22A_VIGRR</name>
<accession>P32293</accession>
<proteinExistence type="evidence at transcript level"/>
<gene>
    <name type="primary">AUX22A</name>
    <name type="synonym">ARG3</name>
</gene>
<reference key="1">
    <citation type="journal article" date="1992" name="Plant Cell Physiol.">
        <title>cDNA cloning of indole-3-acetic acid regulated genes: Aux22 and SAUR from mung bean (Vigna radiata) hypocotyl tissue.</title>
        <authorList>
            <person name="Yamamoto K.T."/>
            <person name="Mori H."/>
            <person name="Imaseki H."/>
        </authorList>
    </citation>
    <scope>NUCLEOTIDE SEQUENCE [MRNA]</scope>
    <source>
        <tissue>Hypocotyl</tissue>
    </source>
</reference>
<evidence type="ECO:0000250" key="1"/>
<evidence type="ECO:0000255" key="2">
    <source>
        <dbReference type="PROSITE-ProRule" id="PRU01081"/>
    </source>
</evidence>
<evidence type="ECO:0000256" key="3">
    <source>
        <dbReference type="SAM" id="MobiDB-lite"/>
    </source>
</evidence>
<evidence type="ECO:0000305" key="4"/>
<sequence>MAKEGLGLEITELRLGLPDAEHVAVANKNGEKKNKRVFSEIDDVGDENSSSGGGGDRKMENKNQVVGWPPVCSYRKKNSVNEASKMYVKVSMDGAPFLRKMDLGMHKGYSDLAFALEKLFGCYGMVEALKNVENGEHVPIYEDKDGDWMLVGDVPWEMFMESCKRLRIMKRADAKGFGLQPKGSLKGFIESVGK</sequence>